<organism>
    <name type="scientific">Cronobacter sakazakii (strain ATCC BAA-894)</name>
    <name type="common">Enterobacter sakazakii</name>
    <dbReference type="NCBI Taxonomy" id="290339"/>
    <lineage>
        <taxon>Bacteria</taxon>
        <taxon>Pseudomonadati</taxon>
        <taxon>Pseudomonadota</taxon>
        <taxon>Gammaproteobacteria</taxon>
        <taxon>Enterobacterales</taxon>
        <taxon>Enterobacteriaceae</taxon>
        <taxon>Cronobacter</taxon>
    </lineage>
</organism>
<reference key="1">
    <citation type="journal article" date="2010" name="PLoS ONE">
        <title>Genome sequence of Cronobacter sakazakii BAA-894 and comparative genomic hybridization analysis with other Cronobacter species.</title>
        <authorList>
            <person name="Kucerova E."/>
            <person name="Clifton S.W."/>
            <person name="Xia X.Q."/>
            <person name="Long F."/>
            <person name="Porwollik S."/>
            <person name="Fulton L."/>
            <person name="Fronick C."/>
            <person name="Minx P."/>
            <person name="Kyung K."/>
            <person name="Warren W."/>
            <person name="Fulton R."/>
            <person name="Feng D."/>
            <person name="Wollam A."/>
            <person name="Shah N."/>
            <person name="Bhonagiri V."/>
            <person name="Nash W.E."/>
            <person name="Hallsworth-Pepin K."/>
            <person name="Wilson R.K."/>
            <person name="McClelland M."/>
            <person name="Forsythe S.J."/>
        </authorList>
    </citation>
    <scope>NUCLEOTIDE SEQUENCE [LARGE SCALE GENOMIC DNA]</scope>
    <source>
        <strain>ATCC BAA-894</strain>
    </source>
</reference>
<evidence type="ECO:0000255" key="1">
    <source>
        <dbReference type="HAMAP-Rule" id="MF_00389"/>
    </source>
</evidence>
<sequence>MKQVAFVFTQAPHGTSAGREGLDALLAMSALTEEIGVFFLSDGVFQILPGQHPQAVLSRDYISTFKVLPLYDIERCYICRESLQERGLSEEHAFVIDVEALDAAALRERLDDYDVVLTF</sequence>
<comment type="function">
    <text evidence="1">Part of a sulfur-relay system required for 2-thiolation of 5-methylaminomethyl-2-thiouridine (mnm(5)s(2)U) at tRNA wobble positions.</text>
</comment>
<comment type="subunit">
    <text evidence="1">Heterohexamer, formed by a dimer of trimers. The hexameric TusBCD complex contains 2 copies each of TusB, TusC and TusD. The TusBCD complex interacts with TusE.</text>
</comment>
<comment type="subcellular location">
    <subcellularLocation>
        <location evidence="1">Cytoplasm</location>
    </subcellularLocation>
</comment>
<comment type="similarity">
    <text evidence="1">Belongs to the DsrF/TusC family.</text>
</comment>
<feature type="chain" id="PRO_1000013243" description="Protein TusC">
    <location>
        <begin position="1"/>
        <end position="119"/>
    </location>
</feature>
<protein>
    <recommendedName>
        <fullName evidence="1">Protein TusC</fullName>
    </recommendedName>
    <alternativeName>
        <fullName evidence="1">tRNA 2-thiouridine synthesizing protein C</fullName>
    </alternativeName>
</protein>
<accession>A7MKI9</accession>
<gene>
    <name evidence="1" type="primary">tusC</name>
    <name type="ordered locus">ESA_04397</name>
</gene>
<keyword id="KW-0963">Cytoplasm</keyword>
<keyword id="KW-1185">Reference proteome</keyword>
<keyword id="KW-0819">tRNA processing</keyword>
<proteinExistence type="inferred from homology"/>
<name>TUSC_CROS8</name>
<dbReference type="EMBL" id="CP000783">
    <property type="protein sequence ID" value="ABU79576.1"/>
    <property type="molecule type" value="Genomic_DNA"/>
</dbReference>
<dbReference type="RefSeq" id="WP_012126417.1">
    <property type="nucleotide sequence ID" value="NC_009778.1"/>
</dbReference>
<dbReference type="SMR" id="A7MKI9"/>
<dbReference type="KEGG" id="esa:ESA_04397"/>
<dbReference type="PATRIC" id="fig|290339.8.peg.3920"/>
<dbReference type="HOGENOM" id="CLU_155943_1_0_6"/>
<dbReference type="Proteomes" id="UP000000260">
    <property type="component" value="Chromosome"/>
</dbReference>
<dbReference type="GO" id="GO:0005737">
    <property type="term" value="C:cytoplasm"/>
    <property type="evidence" value="ECO:0007669"/>
    <property type="project" value="UniProtKB-SubCell"/>
</dbReference>
<dbReference type="GO" id="GO:0008033">
    <property type="term" value="P:tRNA processing"/>
    <property type="evidence" value="ECO:0007669"/>
    <property type="project" value="UniProtKB-UniRule"/>
</dbReference>
<dbReference type="Gene3D" id="3.40.1260.10">
    <property type="entry name" value="DsrEFH-like"/>
    <property type="match status" value="1"/>
</dbReference>
<dbReference type="HAMAP" id="MF_00389">
    <property type="entry name" value="Thiourid_synth_C"/>
    <property type="match status" value="1"/>
</dbReference>
<dbReference type="InterPro" id="IPR027396">
    <property type="entry name" value="DsrEFH-like"/>
</dbReference>
<dbReference type="InterPro" id="IPR003787">
    <property type="entry name" value="Sulphur_relay_DsrE/F-like"/>
</dbReference>
<dbReference type="InterPro" id="IPR037450">
    <property type="entry name" value="Sulphur_relay_TusC"/>
</dbReference>
<dbReference type="InterPro" id="IPR017462">
    <property type="entry name" value="Sulphur_relay_TusC/DsrF"/>
</dbReference>
<dbReference type="NCBIfam" id="NF001238">
    <property type="entry name" value="PRK00211.1"/>
    <property type="match status" value="1"/>
</dbReference>
<dbReference type="NCBIfam" id="TIGR03010">
    <property type="entry name" value="sulf_tusC_dsrF"/>
    <property type="match status" value="1"/>
</dbReference>
<dbReference type="PANTHER" id="PTHR38780">
    <property type="entry name" value="PROTEIN TUSC"/>
    <property type="match status" value="1"/>
</dbReference>
<dbReference type="PANTHER" id="PTHR38780:SF1">
    <property type="entry name" value="PROTEIN TUSC"/>
    <property type="match status" value="1"/>
</dbReference>
<dbReference type="Pfam" id="PF02635">
    <property type="entry name" value="DsrE"/>
    <property type="match status" value="1"/>
</dbReference>
<dbReference type="SUPFAM" id="SSF75169">
    <property type="entry name" value="DsrEFH-like"/>
    <property type="match status" value="1"/>
</dbReference>